<dbReference type="EC" id="2.7.10.2"/>
<dbReference type="EMBL" id="U69109">
    <property type="protein sequence ID" value="AAC52895.1"/>
    <property type="molecule type" value="mRNA"/>
</dbReference>
<dbReference type="EMBL" id="D45854">
    <property type="protein sequence ID" value="BAA08290.1"/>
    <property type="molecule type" value="mRNA"/>
</dbReference>
<dbReference type="EMBL" id="AF063890">
    <property type="protein sequence ID" value="AAC28340.1"/>
    <property type="molecule type" value="mRNA"/>
</dbReference>
<dbReference type="EMBL" id="BC101921">
    <property type="protein sequence ID" value="AAI01922.1"/>
    <property type="molecule type" value="mRNA"/>
</dbReference>
<dbReference type="PIR" id="A57434">
    <property type="entry name" value="A57434"/>
</dbReference>
<dbReference type="RefSeq" id="NP_059014.2">
    <molecule id="P70600-1"/>
    <property type="nucleotide sequence ID" value="NM_017318.3"/>
</dbReference>
<dbReference type="RefSeq" id="XP_006252205.1">
    <property type="nucleotide sequence ID" value="XM_006252143.3"/>
</dbReference>
<dbReference type="RefSeq" id="XP_006252206.1">
    <property type="nucleotide sequence ID" value="XM_006252144.3"/>
</dbReference>
<dbReference type="RefSeq" id="XP_006252207.1">
    <molecule id="P70600-3"/>
    <property type="nucleotide sequence ID" value="XM_006252145.5"/>
</dbReference>
<dbReference type="RefSeq" id="XP_008768995.1">
    <molecule id="P70600-1"/>
    <property type="nucleotide sequence ID" value="XM_008770773.4"/>
</dbReference>
<dbReference type="RefSeq" id="XP_008768996.1">
    <molecule id="P70600-1"/>
    <property type="nucleotide sequence ID" value="XM_008770774.4"/>
</dbReference>
<dbReference type="RefSeq" id="XP_038949535.1">
    <molecule id="P70600-1"/>
    <property type="nucleotide sequence ID" value="XM_039093607.2"/>
</dbReference>
<dbReference type="RefSeq" id="XP_063130657.1">
    <molecule id="P70600-3"/>
    <property type="nucleotide sequence ID" value="XM_063274587.1"/>
</dbReference>
<dbReference type="SMR" id="P70600"/>
<dbReference type="BioGRID" id="248405">
    <property type="interactions" value="9"/>
</dbReference>
<dbReference type="CORUM" id="P70600"/>
<dbReference type="FunCoup" id="P70600">
    <property type="interactions" value="630"/>
</dbReference>
<dbReference type="IntAct" id="P70600">
    <property type="interactions" value="1"/>
</dbReference>
<dbReference type="MINT" id="P70600"/>
<dbReference type="STRING" id="10116.ENSRNOP00000031615"/>
<dbReference type="ChEMBL" id="CHEMBL1075222"/>
<dbReference type="iPTMnet" id="P70600"/>
<dbReference type="PhosphoSitePlus" id="P70600"/>
<dbReference type="jPOST" id="P70600"/>
<dbReference type="PaxDb" id="10116-ENSRNOP00000031615"/>
<dbReference type="Ensembl" id="ENSRNOT00000030007.4">
    <molecule id="P70600-1"/>
    <property type="protein sequence ID" value="ENSRNOP00000031615.1"/>
    <property type="gene ID" value="ENSRNOG00000027839.7"/>
</dbReference>
<dbReference type="Ensembl" id="ENSRNOT00000030036.5">
    <molecule id="P70600-3"/>
    <property type="protein sequence ID" value="ENSRNOP00000036813.5"/>
    <property type="gene ID" value="ENSRNOG00000027839.7"/>
</dbReference>
<dbReference type="GeneID" id="50646"/>
<dbReference type="KEGG" id="rno:50646"/>
<dbReference type="UCSC" id="RGD:628758">
    <molecule id="P70600-1"/>
    <property type="organism name" value="rat"/>
</dbReference>
<dbReference type="AGR" id="RGD:628758"/>
<dbReference type="CTD" id="2185"/>
<dbReference type="RGD" id="628758">
    <property type="gene designation" value="Ptk2b"/>
</dbReference>
<dbReference type="eggNOG" id="KOG4257">
    <property type="taxonomic scope" value="Eukaryota"/>
</dbReference>
<dbReference type="GeneTree" id="ENSGT00940000157269"/>
<dbReference type="HOGENOM" id="CLU_002646_0_1_1"/>
<dbReference type="InParanoid" id="P70600"/>
<dbReference type="OMA" id="EIMSYGQ"/>
<dbReference type="OrthoDB" id="9976756at2759"/>
<dbReference type="PhylomeDB" id="P70600"/>
<dbReference type="TreeFam" id="TF316643"/>
<dbReference type="BRENDA" id="2.7.10.2">
    <property type="organism ID" value="5301"/>
</dbReference>
<dbReference type="Reactome" id="R-RNO-391160">
    <property type="pathway name" value="Signal regulatory protein family interactions"/>
</dbReference>
<dbReference type="Reactome" id="R-RNO-4420097">
    <property type="pathway name" value="VEGFA-VEGFR2 Pathway"/>
</dbReference>
<dbReference type="Reactome" id="R-RNO-9013420">
    <property type="pathway name" value="RHOU GTPase cycle"/>
</dbReference>
<dbReference type="Reactome" id="R-RNO-9020558">
    <property type="pathway name" value="Interleukin-2 signaling"/>
</dbReference>
<dbReference type="PRO" id="PR:P70600"/>
<dbReference type="Proteomes" id="UP000002494">
    <property type="component" value="Chromosome 15"/>
</dbReference>
<dbReference type="Bgee" id="ENSRNOG00000027839">
    <property type="expression patterns" value="Expressed in frontal cortex and 19 other cell types or tissues"/>
</dbReference>
<dbReference type="GO" id="GO:0097440">
    <property type="term" value="C:apical dendrite"/>
    <property type="evidence" value="ECO:0000314"/>
    <property type="project" value="Alzheimers_University_of_Toronto"/>
</dbReference>
<dbReference type="GO" id="GO:0030424">
    <property type="term" value="C:axon"/>
    <property type="evidence" value="ECO:0000314"/>
    <property type="project" value="RGD"/>
</dbReference>
<dbReference type="GO" id="GO:0044297">
    <property type="term" value="C:cell body"/>
    <property type="evidence" value="ECO:0000314"/>
    <property type="project" value="UniProtKB"/>
</dbReference>
<dbReference type="GO" id="GO:0005938">
    <property type="term" value="C:cell cortex"/>
    <property type="evidence" value="ECO:0000314"/>
    <property type="project" value="RGD"/>
</dbReference>
<dbReference type="GO" id="GO:0042995">
    <property type="term" value="C:cell projection"/>
    <property type="evidence" value="ECO:0000314"/>
    <property type="project" value="UniProtKB"/>
</dbReference>
<dbReference type="GO" id="GO:0005856">
    <property type="term" value="C:cytoskeleton"/>
    <property type="evidence" value="ECO:0007669"/>
    <property type="project" value="InterPro"/>
</dbReference>
<dbReference type="GO" id="GO:0030425">
    <property type="term" value="C:dendrite"/>
    <property type="evidence" value="ECO:0000314"/>
    <property type="project" value="Alzheimers_University_of_Toronto"/>
</dbReference>
<dbReference type="GO" id="GO:0005925">
    <property type="term" value="C:focal adhesion"/>
    <property type="evidence" value="ECO:0000314"/>
    <property type="project" value="RGD"/>
</dbReference>
<dbReference type="GO" id="GO:0098978">
    <property type="term" value="C:glutamatergic synapse"/>
    <property type="evidence" value="ECO:0000314"/>
    <property type="project" value="SynGO"/>
</dbReference>
<dbReference type="GO" id="GO:0030426">
    <property type="term" value="C:growth cone"/>
    <property type="evidence" value="ECO:0000314"/>
    <property type="project" value="Alzheimers_University_of_Toronto"/>
</dbReference>
<dbReference type="GO" id="GO:0030027">
    <property type="term" value="C:lamellipodium"/>
    <property type="evidence" value="ECO:0000250"/>
    <property type="project" value="UniProtKB"/>
</dbReference>
<dbReference type="GO" id="GO:0043025">
    <property type="term" value="C:neuronal cell body"/>
    <property type="evidence" value="ECO:0000314"/>
    <property type="project" value="Alzheimers_University_of_Toronto"/>
</dbReference>
<dbReference type="GO" id="GO:0017146">
    <property type="term" value="C:NMDA selective glutamate receptor complex"/>
    <property type="evidence" value="ECO:0000314"/>
    <property type="project" value="Alzheimers_University_of_Toronto"/>
</dbReference>
<dbReference type="GO" id="GO:0005634">
    <property type="term" value="C:nucleus"/>
    <property type="evidence" value="ECO:0000266"/>
    <property type="project" value="RGD"/>
</dbReference>
<dbReference type="GO" id="GO:0048471">
    <property type="term" value="C:perinuclear region of cytoplasm"/>
    <property type="evidence" value="ECO:0000314"/>
    <property type="project" value="RGD"/>
</dbReference>
<dbReference type="GO" id="GO:0005886">
    <property type="term" value="C:plasma membrane"/>
    <property type="evidence" value="ECO:0000318"/>
    <property type="project" value="GO_Central"/>
</dbReference>
<dbReference type="GO" id="GO:0098794">
    <property type="term" value="C:postsynapse"/>
    <property type="evidence" value="ECO:0000314"/>
    <property type="project" value="SynGO"/>
</dbReference>
<dbReference type="GO" id="GO:0014069">
    <property type="term" value="C:postsynaptic density"/>
    <property type="evidence" value="ECO:0000314"/>
    <property type="project" value="Alzheimers_University_of_Toronto"/>
</dbReference>
<dbReference type="GO" id="GO:0099092">
    <property type="term" value="C:postsynaptic density, intracellular component"/>
    <property type="evidence" value="ECO:0000314"/>
    <property type="project" value="SynGO"/>
</dbReference>
<dbReference type="GO" id="GO:0098793">
    <property type="term" value="C:presynapse"/>
    <property type="evidence" value="ECO:0000266"/>
    <property type="project" value="RGD"/>
</dbReference>
<dbReference type="GO" id="GO:0098685">
    <property type="term" value="C:Schaffer collateral - CA1 synapse"/>
    <property type="evidence" value="ECO:0000314"/>
    <property type="project" value="SynGO"/>
</dbReference>
<dbReference type="GO" id="GO:0043423">
    <property type="term" value="F:3-phosphoinositide-dependent protein kinase binding"/>
    <property type="evidence" value="ECO:0000314"/>
    <property type="project" value="RGD"/>
</dbReference>
<dbReference type="GO" id="GO:0005524">
    <property type="term" value="F:ATP binding"/>
    <property type="evidence" value="ECO:0007669"/>
    <property type="project" value="UniProtKB-KW"/>
</dbReference>
<dbReference type="GO" id="GO:0004683">
    <property type="term" value="F:calcium/calmodulin-dependent protein kinase activity"/>
    <property type="evidence" value="ECO:0000314"/>
    <property type="project" value="Alzheimers_University_of_Toronto"/>
</dbReference>
<dbReference type="GO" id="GO:0019899">
    <property type="term" value="F:enzyme binding"/>
    <property type="evidence" value="ECO:0000353"/>
    <property type="project" value="RGD"/>
</dbReference>
<dbReference type="GO" id="GO:0035254">
    <property type="term" value="F:glutamate receptor binding"/>
    <property type="evidence" value="ECO:0000353"/>
    <property type="project" value="ARUK-UCL"/>
</dbReference>
<dbReference type="GO" id="GO:0035255">
    <property type="term" value="F:ionotropic glutamate receptor binding"/>
    <property type="evidence" value="ECO:0000353"/>
    <property type="project" value="Alzheimers_University_of_Toronto"/>
</dbReference>
<dbReference type="GO" id="GO:0099602">
    <property type="term" value="F:neurotransmitter receptor regulator activity"/>
    <property type="evidence" value="ECO:0000315"/>
    <property type="project" value="Alzheimers_University_of_Toronto"/>
</dbReference>
<dbReference type="GO" id="GO:0004715">
    <property type="term" value="F:non-membrane spanning protein tyrosine kinase activity"/>
    <property type="evidence" value="ECO:0000314"/>
    <property type="project" value="Alzheimers_University_of_Toronto"/>
</dbReference>
<dbReference type="GO" id="GO:0004672">
    <property type="term" value="F:protein kinase activity"/>
    <property type="evidence" value="ECO:0000266"/>
    <property type="project" value="RGD"/>
</dbReference>
<dbReference type="GO" id="GO:0044877">
    <property type="term" value="F:protein-containing complex binding"/>
    <property type="evidence" value="ECO:0000353"/>
    <property type="project" value="RGD"/>
</dbReference>
<dbReference type="GO" id="GO:0030546">
    <property type="term" value="F:signaling receptor activator activity"/>
    <property type="evidence" value="ECO:0000314"/>
    <property type="project" value="Alzheimers_University_of_Toronto"/>
</dbReference>
<dbReference type="GO" id="GO:0031625">
    <property type="term" value="F:ubiquitin protein ligase binding"/>
    <property type="evidence" value="ECO:0000353"/>
    <property type="project" value="RGD"/>
</dbReference>
<dbReference type="GO" id="GO:0007015">
    <property type="term" value="P:actin filament organization"/>
    <property type="evidence" value="ECO:0000315"/>
    <property type="project" value="RGD"/>
</dbReference>
<dbReference type="GO" id="GO:0002250">
    <property type="term" value="P:adaptive immune response"/>
    <property type="evidence" value="ECO:0007669"/>
    <property type="project" value="UniProtKB-KW"/>
</dbReference>
<dbReference type="GO" id="GO:0001525">
    <property type="term" value="P:angiogenesis"/>
    <property type="evidence" value="ECO:0000315"/>
    <property type="project" value="RGD"/>
</dbReference>
<dbReference type="GO" id="GO:0043534">
    <property type="term" value="P:blood vessel endothelial cell migration"/>
    <property type="evidence" value="ECO:0000315"/>
    <property type="project" value="RGD"/>
</dbReference>
<dbReference type="GO" id="GO:0045453">
    <property type="term" value="P:bone resorption"/>
    <property type="evidence" value="ECO:0000250"/>
    <property type="project" value="UniProtKB"/>
</dbReference>
<dbReference type="GO" id="GO:0007155">
    <property type="term" value="P:cell adhesion"/>
    <property type="evidence" value="ECO:0000315"/>
    <property type="project" value="RGD"/>
</dbReference>
<dbReference type="GO" id="GO:0030154">
    <property type="term" value="P:cell differentiation"/>
    <property type="evidence" value="ECO:0000270"/>
    <property type="project" value="RGD"/>
</dbReference>
<dbReference type="GO" id="GO:0007166">
    <property type="term" value="P:cell surface receptor signaling pathway"/>
    <property type="evidence" value="ECO:0000250"/>
    <property type="project" value="UniProtKB"/>
</dbReference>
<dbReference type="GO" id="GO:0006968">
    <property type="term" value="P:cellular defense response"/>
    <property type="evidence" value="ECO:0000315"/>
    <property type="project" value="Alzheimers_University_of_Toronto"/>
</dbReference>
<dbReference type="GO" id="GO:0071498">
    <property type="term" value="P:cellular response to fluid shear stress"/>
    <property type="evidence" value="ECO:0000266"/>
    <property type="project" value="RGD"/>
</dbReference>
<dbReference type="GO" id="GO:0071300">
    <property type="term" value="P:cellular response to retinoic acid"/>
    <property type="evidence" value="ECO:0000266"/>
    <property type="project" value="RGD"/>
</dbReference>
<dbReference type="GO" id="GO:0070098">
    <property type="term" value="P:chemokine-mediated signaling pathway"/>
    <property type="evidence" value="ECO:0000250"/>
    <property type="project" value="UniProtKB"/>
</dbReference>
<dbReference type="GO" id="GO:0030865">
    <property type="term" value="P:cortical cytoskeleton organization"/>
    <property type="evidence" value="ECO:0000250"/>
    <property type="project" value="UniProtKB"/>
</dbReference>
<dbReference type="GO" id="GO:0086100">
    <property type="term" value="P:endothelin receptor signaling pathway"/>
    <property type="evidence" value="ECO:0000250"/>
    <property type="project" value="UniProtKB"/>
</dbReference>
<dbReference type="GO" id="GO:0007173">
    <property type="term" value="P:epidermal growth factor receptor signaling pathway"/>
    <property type="evidence" value="ECO:0000315"/>
    <property type="project" value="RGD"/>
</dbReference>
<dbReference type="GO" id="GO:0048041">
    <property type="term" value="P:focal adhesion assembly"/>
    <property type="evidence" value="ECO:0000315"/>
    <property type="project" value="RGD"/>
</dbReference>
<dbReference type="GO" id="GO:0014009">
    <property type="term" value="P:glial cell proliferation"/>
    <property type="evidence" value="ECO:0000270"/>
    <property type="project" value="RGD"/>
</dbReference>
<dbReference type="GO" id="GO:0007229">
    <property type="term" value="P:integrin-mediated signaling pathway"/>
    <property type="evidence" value="ECO:0000250"/>
    <property type="project" value="UniProtKB"/>
</dbReference>
<dbReference type="GO" id="GO:0035235">
    <property type="term" value="P:ionotropic glutamate receptor signaling pathway"/>
    <property type="evidence" value="ECO:0000315"/>
    <property type="project" value="Alzheimers_University_of_Toronto"/>
</dbReference>
<dbReference type="GO" id="GO:0060292">
    <property type="term" value="P:long-term synaptic depression"/>
    <property type="evidence" value="ECO:0000315"/>
    <property type="project" value="RGD"/>
</dbReference>
<dbReference type="GO" id="GO:0060291">
    <property type="term" value="P:long-term synaptic potentiation"/>
    <property type="evidence" value="ECO:0000315"/>
    <property type="project" value="Alzheimers_University_of_Toronto"/>
</dbReference>
<dbReference type="GO" id="GO:0000165">
    <property type="term" value="P:MAPK cascade"/>
    <property type="evidence" value="ECO:0000315"/>
    <property type="project" value="RGD"/>
</dbReference>
<dbReference type="GO" id="GO:0002315">
    <property type="term" value="P:marginal zone B cell differentiation"/>
    <property type="evidence" value="ECO:0000250"/>
    <property type="project" value="UniProtKB"/>
</dbReference>
<dbReference type="GO" id="GO:0043066">
    <property type="term" value="P:negative regulation of apoptotic process"/>
    <property type="evidence" value="ECO:0000250"/>
    <property type="project" value="UniProtKB"/>
</dbReference>
<dbReference type="GO" id="GO:0030502">
    <property type="term" value="P:negative regulation of bone mineralization"/>
    <property type="evidence" value="ECO:0000250"/>
    <property type="project" value="UniProtKB"/>
</dbReference>
<dbReference type="GO" id="GO:0008285">
    <property type="term" value="P:negative regulation of cell population proliferation"/>
    <property type="evidence" value="ECO:0000250"/>
    <property type="project" value="UniProtKB"/>
</dbReference>
<dbReference type="GO" id="GO:0010656">
    <property type="term" value="P:negative regulation of muscle cell apoptotic process"/>
    <property type="evidence" value="ECO:0000315"/>
    <property type="project" value="RGD"/>
</dbReference>
<dbReference type="GO" id="GO:0045638">
    <property type="term" value="P:negative regulation of myeloid cell differentiation"/>
    <property type="evidence" value="ECO:0000266"/>
    <property type="project" value="RGD"/>
</dbReference>
<dbReference type="GO" id="GO:0043524">
    <property type="term" value="P:negative regulation of neuron apoptotic process"/>
    <property type="evidence" value="ECO:0000315"/>
    <property type="project" value="Alzheimers_University_of_Toronto"/>
</dbReference>
<dbReference type="GO" id="GO:0030279">
    <property type="term" value="P:negative regulation of ossification"/>
    <property type="evidence" value="ECO:0000315"/>
    <property type="project" value="RGD"/>
</dbReference>
<dbReference type="GO" id="GO:0043267">
    <property type="term" value="P:negative regulation of potassium ion transport"/>
    <property type="evidence" value="ECO:0000266"/>
    <property type="project" value="RGD"/>
</dbReference>
<dbReference type="GO" id="GO:0031175">
    <property type="term" value="P:neuron projection development"/>
    <property type="evidence" value="ECO:0000315"/>
    <property type="project" value="RGD"/>
</dbReference>
<dbReference type="GO" id="GO:0001556">
    <property type="term" value="P:oocyte maturation"/>
    <property type="evidence" value="ECO:0000315"/>
    <property type="project" value="RGD"/>
</dbReference>
<dbReference type="GO" id="GO:0030838">
    <property type="term" value="P:positive regulation of actin filament polymerization"/>
    <property type="evidence" value="ECO:0000250"/>
    <property type="project" value="UniProtKB"/>
</dbReference>
<dbReference type="GO" id="GO:0045766">
    <property type="term" value="P:positive regulation of angiogenesis"/>
    <property type="evidence" value="ECO:0000266"/>
    <property type="project" value="RGD"/>
</dbReference>
<dbReference type="GO" id="GO:2000538">
    <property type="term" value="P:positive regulation of B cell chemotaxis"/>
    <property type="evidence" value="ECO:0000250"/>
    <property type="project" value="UniProtKB"/>
</dbReference>
<dbReference type="GO" id="GO:0030307">
    <property type="term" value="P:positive regulation of cell growth"/>
    <property type="evidence" value="ECO:0000315"/>
    <property type="project" value="RGD"/>
</dbReference>
<dbReference type="GO" id="GO:0030335">
    <property type="term" value="P:positive regulation of cell migration"/>
    <property type="evidence" value="ECO:0000315"/>
    <property type="project" value="RGD"/>
</dbReference>
<dbReference type="GO" id="GO:0008284">
    <property type="term" value="P:positive regulation of cell population proliferation"/>
    <property type="evidence" value="ECO:0000270"/>
    <property type="project" value="RGD"/>
</dbReference>
<dbReference type="GO" id="GO:0001954">
    <property type="term" value="P:positive regulation of cell-matrix adhesion"/>
    <property type="evidence" value="ECO:0000250"/>
    <property type="project" value="UniProtKB"/>
</dbReference>
<dbReference type="GO" id="GO:0007204">
    <property type="term" value="P:positive regulation of cytosolic calcium ion concentration"/>
    <property type="evidence" value="ECO:0000315"/>
    <property type="project" value="RGD"/>
</dbReference>
<dbReference type="GO" id="GO:2000573">
    <property type="term" value="P:positive regulation of DNA biosynthetic process"/>
    <property type="evidence" value="ECO:0000315"/>
    <property type="project" value="RGD"/>
</dbReference>
<dbReference type="GO" id="GO:0010595">
    <property type="term" value="P:positive regulation of endothelial cell migration"/>
    <property type="evidence" value="ECO:0000266"/>
    <property type="project" value="RGD"/>
</dbReference>
<dbReference type="GO" id="GO:0070374">
    <property type="term" value="P:positive regulation of ERK1 and ERK2 cascade"/>
    <property type="evidence" value="ECO:0000250"/>
    <property type="project" value="UniProtKB"/>
</dbReference>
<dbReference type="GO" id="GO:2000463">
    <property type="term" value="P:positive regulation of excitatory postsynaptic potential"/>
    <property type="evidence" value="ECO:0000315"/>
    <property type="project" value="Alzheimers_University_of_Toronto"/>
</dbReference>
<dbReference type="GO" id="GO:0046330">
    <property type="term" value="P:positive regulation of JNK cascade"/>
    <property type="evidence" value="ECO:0000250"/>
    <property type="project" value="UniProtKB"/>
</dbReference>
<dbReference type="GO" id="GO:0010976">
    <property type="term" value="P:positive regulation of neuron projection development"/>
    <property type="evidence" value="ECO:0000266"/>
    <property type="project" value="RGD"/>
</dbReference>
<dbReference type="GO" id="GO:0045429">
    <property type="term" value="P:positive regulation of nitric oxide biosynthetic process"/>
    <property type="evidence" value="ECO:0000315"/>
    <property type="project" value="RGD"/>
</dbReference>
<dbReference type="GO" id="GO:0051897">
    <property type="term" value="P:positive regulation of phosphatidylinositol 3-kinase/protein kinase B signal transduction"/>
    <property type="evidence" value="ECO:0000250"/>
    <property type="project" value="UniProtKB"/>
</dbReference>
<dbReference type="GO" id="GO:0045860">
    <property type="term" value="P:positive regulation of protein kinase activity"/>
    <property type="evidence" value="ECO:0000250"/>
    <property type="project" value="UniProtKB"/>
</dbReference>
<dbReference type="GO" id="GO:0051247">
    <property type="term" value="P:positive regulation of protein metabolic process"/>
    <property type="evidence" value="ECO:0000315"/>
    <property type="project" value="RGD"/>
</dbReference>
<dbReference type="GO" id="GO:2000379">
    <property type="term" value="P:positive regulation of reactive oxygen species metabolic process"/>
    <property type="evidence" value="ECO:0000315"/>
    <property type="project" value="RGD"/>
</dbReference>
<dbReference type="GO" id="GO:0051968">
    <property type="term" value="P:positive regulation of synaptic transmission, glutamatergic"/>
    <property type="evidence" value="ECO:0000315"/>
    <property type="project" value="Alzheimers_University_of_Toronto"/>
</dbReference>
<dbReference type="GO" id="GO:0045727">
    <property type="term" value="P:positive regulation of translation"/>
    <property type="evidence" value="ECO:0000315"/>
    <property type="project" value="RGD"/>
</dbReference>
<dbReference type="GO" id="GO:2000060">
    <property type="term" value="P:positive regulation of ubiquitin-dependent protein catabolic process"/>
    <property type="evidence" value="ECO:0000250"/>
    <property type="project" value="UniProtKB"/>
</dbReference>
<dbReference type="GO" id="GO:0099170">
    <property type="term" value="P:postsynaptic modulation of chemical synaptic transmission"/>
    <property type="evidence" value="ECO:0000314"/>
    <property type="project" value="SynGO"/>
</dbReference>
<dbReference type="GO" id="GO:0032956">
    <property type="term" value="P:regulation of actin cytoskeleton organization"/>
    <property type="evidence" value="ECO:0000250"/>
    <property type="project" value="UniProtKB"/>
</dbReference>
<dbReference type="GO" id="GO:0030155">
    <property type="term" value="P:regulation of cell adhesion"/>
    <property type="evidence" value="ECO:0000250"/>
    <property type="project" value="UniProtKB"/>
</dbReference>
<dbReference type="GO" id="GO:0008360">
    <property type="term" value="P:regulation of cell shape"/>
    <property type="evidence" value="ECO:0000250"/>
    <property type="project" value="UniProtKB"/>
</dbReference>
<dbReference type="GO" id="GO:0010758">
    <property type="term" value="P:regulation of macrophage chemotaxis"/>
    <property type="evidence" value="ECO:0000250"/>
    <property type="project" value="UniProtKB"/>
</dbReference>
<dbReference type="GO" id="GO:0099151">
    <property type="term" value="P:regulation of postsynaptic density assembly"/>
    <property type="evidence" value="ECO:0000266"/>
    <property type="project" value="RGD"/>
</dbReference>
<dbReference type="GO" id="GO:0051279">
    <property type="term" value="P:regulation of release of sequestered calcium ion into cytosol"/>
    <property type="evidence" value="ECO:0000250"/>
    <property type="project" value="UniProtKB"/>
</dbReference>
<dbReference type="GO" id="GO:2000058">
    <property type="term" value="P:regulation of ubiquitin-dependent protein catabolic process"/>
    <property type="evidence" value="ECO:0000266"/>
    <property type="project" value="RGD"/>
</dbReference>
<dbReference type="GO" id="GO:0051592">
    <property type="term" value="P:response to calcium ion"/>
    <property type="evidence" value="ECO:0000270"/>
    <property type="project" value="RGD"/>
</dbReference>
<dbReference type="GO" id="GO:0051591">
    <property type="term" value="P:response to cAMP"/>
    <property type="evidence" value="ECO:0000270"/>
    <property type="project" value="RGD"/>
</dbReference>
<dbReference type="GO" id="GO:0043157">
    <property type="term" value="P:response to cation stress"/>
    <property type="evidence" value="ECO:0000314"/>
    <property type="project" value="Alzheimers_University_of_Toronto"/>
</dbReference>
<dbReference type="GO" id="GO:0042220">
    <property type="term" value="P:response to cocaine"/>
    <property type="evidence" value="ECO:0000270"/>
    <property type="project" value="RGD"/>
</dbReference>
<dbReference type="GO" id="GO:0045471">
    <property type="term" value="P:response to ethanol"/>
    <property type="evidence" value="ECO:0000270"/>
    <property type="project" value="RGD"/>
</dbReference>
<dbReference type="GO" id="GO:0009749">
    <property type="term" value="P:response to glucose"/>
    <property type="evidence" value="ECO:0000270"/>
    <property type="project" value="RGD"/>
</dbReference>
<dbReference type="GO" id="GO:0009725">
    <property type="term" value="P:response to hormone"/>
    <property type="evidence" value="ECO:0000270"/>
    <property type="project" value="RGD"/>
</dbReference>
<dbReference type="GO" id="GO:0042542">
    <property type="term" value="P:response to hydrogen peroxide"/>
    <property type="evidence" value="ECO:0000353"/>
    <property type="project" value="RGD"/>
</dbReference>
<dbReference type="GO" id="GO:0001666">
    <property type="term" value="P:response to hypoxia"/>
    <property type="evidence" value="ECO:0000270"/>
    <property type="project" value="RGD"/>
</dbReference>
<dbReference type="GO" id="GO:0035902">
    <property type="term" value="P:response to immobilization stress"/>
    <property type="evidence" value="ECO:0000270"/>
    <property type="project" value="RGD"/>
</dbReference>
<dbReference type="GO" id="GO:0002931">
    <property type="term" value="P:response to ischemia"/>
    <property type="evidence" value="ECO:0000315"/>
    <property type="project" value="Alzheimers_University_of_Toronto"/>
</dbReference>
<dbReference type="GO" id="GO:0009612">
    <property type="term" value="P:response to mechanical stimulus"/>
    <property type="evidence" value="ECO:0000270"/>
    <property type="project" value="RGD"/>
</dbReference>
<dbReference type="GO" id="GO:0000302">
    <property type="term" value="P:response to reactive oxygen species"/>
    <property type="evidence" value="ECO:0000270"/>
    <property type="project" value="RGD"/>
</dbReference>
<dbReference type="GO" id="GO:0009410">
    <property type="term" value="P:response to xenobiotic stimulus"/>
    <property type="evidence" value="ECO:0000270"/>
    <property type="project" value="RGD"/>
</dbReference>
<dbReference type="GO" id="GO:0007172">
    <property type="term" value="P:signal complex assembly"/>
    <property type="evidence" value="ECO:0007669"/>
    <property type="project" value="InterPro"/>
</dbReference>
<dbReference type="GO" id="GO:0002040">
    <property type="term" value="P:sprouting angiogenesis"/>
    <property type="evidence" value="ECO:0000250"/>
    <property type="project" value="UniProtKB"/>
</dbReference>
<dbReference type="GO" id="GO:0043149">
    <property type="term" value="P:stress fiber assembly"/>
    <property type="evidence" value="ECO:0000315"/>
    <property type="project" value="RGD"/>
</dbReference>
<dbReference type="GO" id="GO:0033209">
    <property type="term" value="P:tumor necrosis factor-mediated signaling pathway"/>
    <property type="evidence" value="ECO:0000266"/>
    <property type="project" value="RGD"/>
</dbReference>
<dbReference type="GO" id="GO:0048010">
    <property type="term" value="P:vascular endothelial growth factor receptor signaling pathway"/>
    <property type="evidence" value="ECO:0000266"/>
    <property type="project" value="RGD"/>
</dbReference>
<dbReference type="CDD" id="cd14473">
    <property type="entry name" value="FERM_B-lobe"/>
    <property type="match status" value="1"/>
</dbReference>
<dbReference type="CDD" id="cd13190">
    <property type="entry name" value="FERM_C_FAK1"/>
    <property type="match status" value="1"/>
</dbReference>
<dbReference type="CDD" id="cd05056">
    <property type="entry name" value="PTKc_FAK"/>
    <property type="match status" value="1"/>
</dbReference>
<dbReference type="FunFam" id="1.20.80.10:FF:000004">
    <property type="entry name" value="Protein-tyrosine kinase 2-beta isoform 1"/>
    <property type="match status" value="1"/>
</dbReference>
<dbReference type="FunFam" id="1.20.120.330:FF:000007">
    <property type="entry name" value="protein-tyrosine kinase 2-beta isoform X1"/>
    <property type="match status" value="1"/>
</dbReference>
<dbReference type="FunFam" id="2.30.29.30:FF:000142">
    <property type="entry name" value="protein-tyrosine kinase 2-beta isoform X1"/>
    <property type="match status" value="1"/>
</dbReference>
<dbReference type="FunFam" id="3.10.20.90:FF:000080">
    <property type="entry name" value="protein-tyrosine kinase 2-beta isoform X1"/>
    <property type="match status" value="1"/>
</dbReference>
<dbReference type="FunFam" id="3.30.200.20:FF:000194">
    <property type="entry name" value="protein-tyrosine kinase 2-beta isoform X1"/>
    <property type="match status" value="1"/>
</dbReference>
<dbReference type="FunFam" id="1.10.510.10:FF:000230">
    <property type="entry name" value="protein-tyrosine kinase 2-beta isoform X2"/>
    <property type="match status" value="1"/>
</dbReference>
<dbReference type="Gene3D" id="1.20.80.10">
    <property type="match status" value="1"/>
</dbReference>
<dbReference type="Gene3D" id="1.20.120.330">
    <property type="entry name" value="Nucleotidyltransferases domain 2"/>
    <property type="match status" value="1"/>
</dbReference>
<dbReference type="Gene3D" id="3.10.20.90">
    <property type="entry name" value="Phosphatidylinositol 3-kinase Catalytic Subunit, Chain A, domain 1"/>
    <property type="match status" value="1"/>
</dbReference>
<dbReference type="Gene3D" id="3.30.200.20">
    <property type="entry name" value="Phosphorylase Kinase, domain 1"/>
    <property type="match status" value="1"/>
</dbReference>
<dbReference type="Gene3D" id="2.30.29.30">
    <property type="entry name" value="Pleckstrin-homology domain (PH domain)/Phosphotyrosine-binding domain (PTB)"/>
    <property type="match status" value="1"/>
</dbReference>
<dbReference type="Gene3D" id="1.10.510.10">
    <property type="entry name" value="Transferase(Phosphotransferase) domain 1"/>
    <property type="match status" value="1"/>
</dbReference>
<dbReference type="InterPro" id="IPR019749">
    <property type="entry name" value="Band_41_domain"/>
</dbReference>
<dbReference type="InterPro" id="IPR041390">
    <property type="entry name" value="FADK_N"/>
</dbReference>
<dbReference type="InterPro" id="IPR049385">
    <property type="entry name" value="FAK1-like_FERM_C"/>
</dbReference>
<dbReference type="InterPro" id="IPR041784">
    <property type="entry name" value="FAK1/PYK2_FERM_C"/>
</dbReference>
<dbReference type="InterPro" id="IPR014352">
    <property type="entry name" value="FERM/acyl-CoA-bd_prot_sf"/>
</dbReference>
<dbReference type="InterPro" id="IPR035963">
    <property type="entry name" value="FERM_2"/>
</dbReference>
<dbReference type="InterPro" id="IPR019748">
    <property type="entry name" value="FERM_central"/>
</dbReference>
<dbReference type="InterPro" id="IPR000299">
    <property type="entry name" value="FERM_domain"/>
</dbReference>
<dbReference type="InterPro" id="IPR036137">
    <property type="entry name" value="Focal_adhe_kin_target_dom_sf"/>
</dbReference>
<dbReference type="InterPro" id="IPR005189">
    <property type="entry name" value="Focal_adhesion_kin_target_dom"/>
</dbReference>
<dbReference type="InterPro" id="IPR011009">
    <property type="entry name" value="Kinase-like_dom_sf"/>
</dbReference>
<dbReference type="InterPro" id="IPR011993">
    <property type="entry name" value="PH-like_dom_sf"/>
</dbReference>
<dbReference type="InterPro" id="IPR000719">
    <property type="entry name" value="Prot_kinase_dom"/>
</dbReference>
<dbReference type="InterPro" id="IPR017441">
    <property type="entry name" value="Protein_kinase_ATP_BS"/>
</dbReference>
<dbReference type="InterPro" id="IPR001245">
    <property type="entry name" value="Ser-Thr/Tyr_kinase_cat_dom"/>
</dbReference>
<dbReference type="InterPro" id="IPR008266">
    <property type="entry name" value="Tyr_kinase_AS"/>
</dbReference>
<dbReference type="InterPro" id="IPR020635">
    <property type="entry name" value="Tyr_kinase_cat_dom"/>
</dbReference>
<dbReference type="InterPro" id="IPR029071">
    <property type="entry name" value="Ubiquitin-like_domsf"/>
</dbReference>
<dbReference type="PANTHER" id="PTHR46221">
    <property type="entry name" value="FERM AND PDZ DOMAIN-CONTAINING PROTEIN FAMILY MEMBER"/>
    <property type="match status" value="1"/>
</dbReference>
<dbReference type="PANTHER" id="PTHR46221:SF11">
    <property type="entry name" value="NON-SPECIFIC PROTEIN-TYROSINE KINASE"/>
    <property type="match status" value="1"/>
</dbReference>
<dbReference type="Pfam" id="PF21477">
    <property type="entry name" value="FERM_C_FAK1"/>
    <property type="match status" value="1"/>
</dbReference>
<dbReference type="Pfam" id="PF00373">
    <property type="entry name" value="FERM_M"/>
    <property type="match status" value="1"/>
</dbReference>
<dbReference type="Pfam" id="PF18038">
    <property type="entry name" value="FERM_N_2"/>
    <property type="match status" value="1"/>
</dbReference>
<dbReference type="Pfam" id="PF03623">
    <property type="entry name" value="Focal_AT"/>
    <property type="match status" value="1"/>
</dbReference>
<dbReference type="Pfam" id="PF07714">
    <property type="entry name" value="PK_Tyr_Ser-Thr"/>
    <property type="match status" value="1"/>
</dbReference>
<dbReference type="PRINTS" id="PR00109">
    <property type="entry name" value="TYRKINASE"/>
</dbReference>
<dbReference type="SMART" id="SM00295">
    <property type="entry name" value="B41"/>
    <property type="match status" value="1"/>
</dbReference>
<dbReference type="SMART" id="SM00219">
    <property type="entry name" value="TyrKc"/>
    <property type="match status" value="1"/>
</dbReference>
<dbReference type="SUPFAM" id="SSF68993">
    <property type="entry name" value="FAT domain of focal adhesion kinase"/>
    <property type="match status" value="1"/>
</dbReference>
<dbReference type="SUPFAM" id="SSF50729">
    <property type="entry name" value="PH domain-like"/>
    <property type="match status" value="1"/>
</dbReference>
<dbReference type="SUPFAM" id="SSF56112">
    <property type="entry name" value="Protein kinase-like (PK-like)"/>
    <property type="match status" value="1"/>
</dbReference>
<dbReference type="SUPFAM" id="SSF47031">
    <property type="entry name" value="Second domain of FERM"/>
    <property type="match status" value="1"/>
</dbReference>
<dbReference type="SUPFAM" id="SSF54236">
    <property type="entry name" value="Ubiquitin-like"/>
    <property type="match status" value="1"/>
</dbReference>
<dbReference type="PROSITE" id="PS50057">
    <property type="entry name" value="FERM_3"/>
    <property type="match status" value="1"/>
</dbReference>
<dbReference type="PROSITE" id="PS00107">
    <property type="entry name" value="PROTEIN_KINASE_ATP"/>
    <property type="match status" value="1"/>
</dbReference>
<dbReference type="PROSITE" id="PS50011">
    <property type="entry name" value="PROTEIN_KINASE_DOM"/>
    <property type="match status" value="1"/>
</dbReference>
<dbReference type="PROSITE" id="PS00109">
    <property type="entry name" value="PROTEIN_KINASE_TYR"/>
    <property type="match status" value="1"/>
</dbReference>
<accession>P70600</accession>
<accession>O88489</accession>
<accession>Q3T1H4</accession>
<accession>Q63201</accession>
<sequence>MSGVSEPLSRVKVGTLRPPEGPPEPMVVVPVDVEKEDVRILKVCFYSNSFNPGKNFKLVKCTVQTEIQEIITSILLSGRIGPNIQLAECYGLRLKHMKSDEIHWLHPQMTVGEVQDKYECLHVEAEWRYDLQIRYLPEDFMESLKEDRTTLLYFYQQLRNDYMQRYASKVSEGMALQLGCLELRRFFKDMPHNALDKKSNFELLEKEVGLDLFFPKQMQENLKPKQFRKMIQQTFQQYASLREEECVMKFFNTLAGFANIDQETYRCELIQGWNITVDLVIGPKGIRQLTSQDTKPTCLAEFKQIRSIRCLPLEETQAVLQLGIEGAPQSLSIKTSSLAEAENMADLIDGYCRLQGEHKGSLIIHAKKDGEKRNSLPQIPTLNLESRRSHLSESCSIESDIYAEIPDETLRRPGGPQYGVAREDVVLNRILGEGFFGEVYEGVYTNHKGEKINVAVKTCKKDCTLDNKEKFMSEAVIMKNLDHPHIVKLIGIIEEEPTWIVMELYPYGELGHYLERNKNSLKVPTLVLYALQICKAMAYLESINCVHRDIAVRNILVASPECVKLGDFGLSRYIEDEDYYKASVTRLPIKWMSPESINFRRFTTASDVWMFAVCMWEILSFGKQPFFWLENKDVIGVLEKGDRLPKPELCPPVLYTLMTRCWDYDPSDRPRFTELVCSLSDIYQMERDIAIEQERNARYRPPKILEPTAFQEPPPKPSRPKYKHPPQTNLLAPKLQFQVPEGLCASSPTLTSPMEYPSPVNSLHTPPLHRHNVFKRHSMREEDFIRPSSREEAQQLWEAEKIKMRQVLDRQQKQMVEDSQWLRREERCLDPMVYMNDKSPLTPEKEAGYTEFTGPPQKPPRLGAQSIQPTANLDRTDDLVYHNVMTLVEAVLELKNKLSQLPPEEYVVVVKNVGLNLRKLIGSVDDLLPSLPASSRTEIEGTQKLLNKDLAELINKMRLAQQNAVTSLSEDCKRQMLTASHTLAVDAKNLLDAVDQAKVVANLAHPPAE</sequence>
<organism>
    <name type="scientific">Rattus norvegicus</name>
    <name type="common">Rat</name>
    <dbReference type="NCBI Taxonomy" id="10116"/>
    <lineage>
        <taxon>Eukaryota</taxon>
        <taxon>Metazoa</taxon>
        <taxon>Chordata</taxon>
        <taxon>Craniata</taxon>
        <taxon>Vertebrata</taxon>
        <taxon>Euteleostomi</taxon>
        <taxon>Mammalia</taxon>
        <taxon>Eutheria</taxon>
        <taxon>Euarchontoglires</taxon>
        <taxon>Glires</taxon>
        <taxon>Rodentia</taxon>
        <taxon>Myomorpha</taxon>
        <taxon>Muroidea</taxon>
        <taxon>Muridae</taxon>
        <taxon>Murinae</taxon>
        <taxon>Rattus</taxon>
    </lineage>
</organism>
<name>FAK2_RAT</name>
<reference key="1">
    <citation type="journal article" date="1996" name="J. Biol. Chem.">
        <title>Activation of a novel calcium-dependent protein-tyrosine kinase. Correlation with c-Jun N-terminal kinase but not mitogen-activated protein kinase activation.</title>
        <authorList>
            <person name="Yu H."/>
            <person name="Li X."/>
            <person name="Marchetto G.S."/>
            <person name="Dy R."/>
            <person name="Hunter D."/>
            <person name="Calvo B."/>
            <person name="Dawson T.L."/>
            <person name="Wilm M."/>
            <person name="Anderegg R.J."/>
            <person name="Graves L.M."/>
            <person name="Earp H.S."/>
        </authorList>
    </citation>
    <scope>NUCLEOTIDE SEQUENCE [MRNA] (ISOFORM 1)</scope>
    <scope>PROTEIN SEQUENCE OF 310-334; 553-572; 672-687 AND 989-998</scope>
    <source>
        <tissue>Liver epithelium</tissue>
    </source>
</reference>
<reference key="2">
    <citation type="journal article" date="1995" name="J. Biol. Chem.">
        <title>Cloning and characterization of cell adhesion kinase beta, a novel protein-tyrosine kinase of the focal adhesion kinase subfamily.</title>
        <authorList>
            <person name="Sasaki H."/>
            <person name="Nagura K."/>
            <person name="Ishino M."/>
            <person name="Tobioka H."/>
            <person name="Kotani K."/>
            <person name="Sasaki T."/>
        </authorList>
    </citation>
    <scope>NUCLEOTIDE SEQUENCE [MRNA] (ISOFORM 1)</scope>
    <source>
        <strain>Sprague-Dawley</strain>
        <tissue>Brain</tissue>
    </source>
</reference>
<reference key="3">
    <citation type="journal article" date="1998" name="J. Cell Sci.">
        <title>Expression and characterization of splice variants of PYK2, a focal adhesion kinase-related protein.</title>
        <authorList>
            <person name="Xiong W.-C."/>
            <person name="Macklem M."/>
            <person name="Parsons J.T."/>
        </authorList>
    </citation>
    <scope>NUCLEOTIDE SEQUENCE [MRNA] (ISOFORMS 2 AND 3)</scope>
    <scope>SUBCELLULAR LOCATION</scope>
    <scope>DOMAIN FAT</scope>
    <source>
        <tissue>Hippocampus</tissue>
    </source>
</reference>
<reference key="4">
    <citation type="journal article" date="2004" name="Genome Res.">
        <title>The status, quality, and expansion of the NIH full-length cDNA project: the Mammalian Gene Collection (MGC).</title>
        <authorList>
            <consortium name="The MGC Project Team"/>
        </authorList>
    </citation>
    <scope>NUCLEOTIDE SEQUENCE [LARGE SCALE MRNA] (ISOFORM 1)</scope>
    <source>
        <tissue>Prostate</tissue>
    </source>
</reference>
<reference key="5">
    <citation type="journal article" date="1995" name="Nature">
        <title>Protein tyrosine kinase PYK2 involved in Ca(2+)-induced regulation of ion channel and MAP kinase functions.</title>
        <authorList>
            <person name="Lev S."/>
            <person name="Moreno H."/>
            <person name="Martinez R."/>
            <person name="Canoll P."/>
            <person name="Peles E."/>
            <person name="Musacchio J.M."/>
            <person name="Plowman G.D."/>
            <person name="Rudy B."/>
            <person name="Schlessinger J."/>
        </authorList>
    </citation>
    <scope>FUNCTION</scope>
    <scope>PHOSPHORYLATION</scope>
</reference>
<reference key="6">
    <citation type="journal article" date="1996" name="Nature">
        <title>A role for Pyk2 and Src in linking G-protein-coupled receptors with MAP kinase activation.</title>
        <authorList>
            <person name="Dikic I."/>
            <person name="Tokiwa G."/>
            <person name="Lev S."/>
            <person name="Courtneidge S.A."/>
            <person name="Schlessinger J."/>
        </authorList>
    </citation>
    <scope>FUNCTION IN G-PROTEIN COUPLED RECEPTOR SIGNALING AND PHOSPHORYLATION OF SRC</scope>
    <scope>INTERACTION WITH SRC</scope>
    <scope>PHOSPHORYLATION</scope>
</reference>
<reference key="7">
    <citation type="journal article" date="1998" name="J. Biol. Chem.">
        <title>Cell adhesion kinase beta forms a complex with a new member, Hic-5, of proteins localized at focal adhesions.</title>
        <authorList>
            <person name="Matsuya M."/>
            <person name="Sasaki H."/>
            <person name="Aoto H."/>
            <person name="Mitaka T."/>
            <person name="Nagura K."/>
            <person name="Ohba T."/>
            <person name="Ishino M."/>
            <person name="Takahashi S."/>
            <person name="Suzuki R."/>
            <person name="Sasaki T."/>
        </authorList>
    </citation>
    <scope>INTERACTION WITH TGFB1I1</scope>
</reference>
<reference key="8">
    <citation type="journal article" date="2002" name="J. Biol. Chem.">
        <title>Pyk2/CAKbeta tyrosine kinase activity-mediated angiogenesis of pulmonary vascular endothelial cells.</title>
        <authorList>
            <person name="Tang H."/>
            <person name="Hao Q."/>
            <person name="Fitzgerald T."/>
            <person name="Sasaki T."/>
            <person name="Landon E.J."/>
            <person name="Inagami T."/>
        </authorList>
    </citation>
    <scope>FUNCTION IN ANGIOGENESIS; CELL MIGRATION; CELL SPREADING AND REORGANIZATION OF THE ACTIN CYTOSKELETON</scope>
    <scope>TISSUE SPECIFICITY</scope>
</reference>
<reference key="9">
    <citation type="journal article" date="2002" name="J. Biol. Chem.">
        <title>Signal transduction of physiological concentrations of vasopressin in A7r5 vascular smooth muscle cells. A role for PYK2 and tyrosine phosphorylation of K+ channels in the stimulation of Ca2+ spiking.</title>
        <authorList>
            <person name="Byron K.L."/>
            <person name="Lucchesi P.A."/>
        </authorList>
    </citation>
    <scope>INTERACTION WITH KCNA2</scope>
</reference>
<reference key="10">
    <citation type="journal article" date="2002" name="J. Neurosci.">
        <title>Metabotropic glutamate receptor 1-induced upregulation of NMDA receptor current: mediation through the Pyk2/Src-family kinase pathway in cortical neurons.</title>
        <authorList>
            <person name="Heidinger V."/>
            <person name="Manzerra P."/>
            <person name="Wang X.Q."/>
            <person name="Strasser U."/>
            <person name="Yu S.P."/>
            <person name="Choi D.W."/>
            <person name="Behrens M.M."/>
        </authorList>
    </citation>
    <scope>FUNCTION IN SRC-MEDIATED PHOSPHORYLATION OF NMDA RECEPTORS AND REGULATION OF NMDA RECEPTOR CHANNEL ACTIVITY</scope>
</reference>
<reference key="11">
    <citation type="journal article" date="2006" name="Cell. Signal.">
        <title>Differential regulation of Pyk2 phosphorylation at Tyr-402 and Tyr-580 in intestinal epithelial cells: roles of calcium, Src, Rho kinase, and the cytoskeleton.</title>
        <authorList>
            <person name="Wu S.S."/>
            <person name="Jacamo R.O."/>
            <person name="Vong S.K."/>
            <person name="Rozengurt E."/>
        </authorList>
    </citation>
    <scope>FUNCTION</scope>
    <scope>PHOSPHORYLATION AT TYR-402 AND TYR-580</scope>
    <scope>CATALYTIC ACTIVITY</scope>
</reference>
<reference key="12">
    <citation type="journal article" date="2010" name="J. Neurosci.">
        <title>Postsynaptic clustering and activation of Pyk2 by PSD-95.</title>
        <authorList>
            <person name="Bartos J.A."/>
            <person name="Ulrich J.D."/>
            <person name="Li H."/>
            <person name="Beazely M.A."/>
            <person name="Chen Y."/>
            <person name="Macdonald J.F."/>
            <person name="Hell J.W."/>
        </authorList>
    </citation>
    <scope>AUTOPHOSPHORYLATION</scope>
    <scope>INTERACTION WITH DLG4</scope>
</reference>
<reference key="13">
    <citation type="journal article" date="2011" name="Am. J. Physiol.">
        <title>PYK2 signaling is required for PDGF-dependent vascular smooth muscle cell proliferation.</title>
        <authorList>
            <person name="Perez J."/>
            <person name="Torres R.A."/>
            <person name="Rocic P."/>
            <person name="Cismowski M.J."/>
            <person name="Weber D.S."/>
            <person name="Darley-Usmar V.M."/>
            <person name="Lucchesi P.A."/>
        </authorList>
    </citation>
    <scope>FUNCTION</scope>
</reference>
<reference key="14">
    <citation type="journal article" date="2011" name="Cell. Signal.">
        <title>The Pyk2 FERM regulates Pyk2 complex formation and phosphorylation.</title>
        <authorList>
            <person name="Riggs D."/>
            <person name="Yang Z."/>
            <person name="Kloss J."/>
            <person name="Loftus J.C."/>
        </authorList>
    </citation>
    <scope>PHOSPHORYLATION AT TYR-402; TYR-579 AND TYR-580</scope>
    <scope>SUBUNIT</scope>
</reference>
<reference key="15">
    <citation type="journal article" date="2012" name="Nat. Commun.">
        <title>Quantitative maps of protein phosphorylation sites across 14 different rat organs and tissues.</title>
        <authorList>
            <person name="Lundby A."/>
            <person name="Secher A."/>
            <person name="Lage K."/>
            <person name="Nordsborg N.B."/>
            <person name="Dmytriyev A."/>
            <person name="Lundby C."/>
            <person name="Olsen J.V."/>
        </authorList>
    </citation>
    <scope>PHOSPHORYLATION [LARGE SCALE ANALYSIS] AT SER-375</scope>
    <scope>IDENTIFICATION BY MASS SPECTROMETRY [LARGE SCALE ANALYSIS]</scope>
</reference>
<gene>
    <name type="primary">Ptk2b</name>
    <name type="synonym">Fak2</name>
    <name type="synonym">Pyk2</name>
</gene>
<evidence type="ECO:0000250" key="1"/>
<evidence type="ECO:0000250" key="2">
    <source>
        <dbReference type="UniProtKB" id="Q14289"/>
    </source>
</evidence>
<evidence type="ECO:0000255" key="3">
    <source>
        <dbReference type="PROSITE-ProRule" id="PRU00084"/>
    </source>
</evidence>
<evidence type="ECO:0000255" key="4">
    <source>
        <dbReference type="PROSITE-ProRule" id="PRU00159"/>
    </source>
</evidence>
<evidence type="ECO:0000255" key="5">
    <source>
        <dbReference type="PROSITE-ProRule" id="PRU10028"/>
    </source>
</evidence>
<evidence type="ECO:0000256" key="6">
    <source>
        <dbReference type="SAM" id="MobiDB-lite"/>
    </source>
</evidence>
<evidence type="ECO:0000269" key="7">
    <source>
    </source>
</evidence>
<evidence type="ECO:0000269" key="8">
    <source>
    </source>
</evidence>
<evidence type="ECO:0000269" key="9">
    <source>
    </source>
</evidence>
<evidence type="ECO:0000269" key="10">
    <source>
    </source>
</evidence>
<evidence type="ECO:0000269" key="11">
    <source>
    </source>
</evidence>
<evidence type="ECO:0000269" key="12">
    <source>
    </source>
</evidence>
<evidence type="ECO:0000269" key="13">
    <source>
    </source>
</evidence>
<evidence type="ECO:0000269" key="14">
    <source>
    </source>
</evidence>
<evidence type="ECO:0000269" key="15">
    <source>
    </source>
</evidence>
<evidence type="ECO:0000303" key="16">
    <source>
    </source>
</evidence>
<evidence type="ECO:0000305" key="17"/>
<evidence type="ECO:0007744" key="18">
    <source>
    </source>
</evidence>
<protein>
    <recommendedName>
        <fullName>Protein-tyrosine kinase 2-beta</fullName>
        <ecNumber>2.7.10.2</ecNumber>
    </recommendedName>
    <alternativeName>
        <fullName>Calcium-dependent tyrosine kinase</fullName>
        <shortName>CADTK</shortName>
    </alternativeName>
    <alternativeName>
        <fullName>Calcium-regulated non-receptor proline-rich tyrosine kinase</fullName>
    </alternativeName>
    <alternativeName>
        <fullName>Cell adhesion kinase beta</fullName>
        <shortName>CAK-beta</shortName>
        <shortName>CAKB</shortName>
    </alternativeName>
    <alternativeName>
        <fullName>Focal adhesion kinase 2</fullName>
        <shortName>FADK 2</shortName>
    </alternativeName>
    <alternativeName>
        <fullName>Proline-rich tyrosine kinase 2</fullName>
    </alternativeName>
</protein>
<proteinExistence type="evidence at protein level"/>
<keyword id="KW-1064">Adaptive immunity</keyword>
<keyword id="KW-0025">Alternative splicing</keyword>
<keyword id="KW-0037">Angiogenesis</keyword>
<keyword id="KW-0067">ATP-binding</keyword>
<keyword id="KW-0965">Cell junction</keyword>
<keyword id="KW-1003">Cell membrane</keyword>
<keyword id="KW-0966">Cell projection</keyword>
<keyword id="KW-0963">Cytoplasm</keyword>
<keyword id="KW-0903">Direct protein sequencing</keyword>
<keyword id="KW-0391">Immunity</keyword>
<keyword id="KW-0418">Kinase</keyword>
<keyword id="KW-0472">Membrane</keyword>
<keyword id="KW-0547">Nucleotide-binding</keyword>
<keyword id="KW-0539">Nucleus</keyword>
<keyword id="KW-0597">Phosphoprotein</keyword>
<keyword id="KW-1185">Reference proteome</keyword>
<keyword id="KW-0808">Transferase</keyword>
<keyword id="KW-0829">Tyrosine-protein kinase</keyword>
<comment type="function">
    <text evidence="1 12">Non-receptor protein-tyrosine kinase that regulates reorganization of the actin cytoskeleton, cell polarization, cell migration, adhesion, spreading and bone remodeling. Plays a role in the regulation of the humoral immune response, and is required for normal levels of marginal B-cells in the spleen and normal migration of splenic B-cells. Required for normal macrophage polarization and migration towards sites of inflammation. Regulates cytoskeleton rearrangement and cell spreading in T-cells, and contributes to the regulation of T-cell responses. Promotes osteoclastic bone resorption; this requires both PTK2B/PYK2 and SRC. May inhibit differentiation and activity of osteoprogenitor cells. Functions in signaling downstream of integrin and collagen receptors, immune receptors, G-protein coupled receptors (GPCR), cytokine, chemokine and growth factor receptors, and mediates responses to cellular stress. Forms multisubunit signaling complexes with SRC and SRC family members upon activation; this leads to the phosphorylation of additional tyrosine residues, creating binding sites for scaffold proteins, effectors and substrates. Regulates numerous signaling pathways. Promotes activation of phosphatidylinositol 3-kinase and of the AKT1 signaling cascade. Promotes activation of NOS3. Regulates production of the cellular messenger cGMP. Promotes activation of the MAP kinase signaling cascade, including activation of MAPK1/ERK2, MAPK3/ERK1 and MAPK8/JNK1. Promotes activation of Rho family GTPases, such as RHOA and RAC1. Recruits the ubiquitin ligase MDM2 to P53/TP53 in the nucleus, and thereby regulates P53/TP53 activity, P53/TP53 ubiquitination and proteasomal degradation. Acts as a scaffold, binding to both PDPK1 and SRC, thereby allowing SRC to phosphorylate PDPK1 at 'Tyr-9, 'Tyr-373', and 'Tyr-376' (By similarity). Promotes phosphorylation of NMDA receptors by SRC family members, and thereby contributes to the regulation of NMDA receptor ion channel activity and intracellular Ca(2+) levels. May also regulate potassium ion transport by phosphorylation of potassium channel subunits. Phosphorylates SRC; this increases SRC kinase activity. Phosphorylates ASAP1, NPHP1, KCNA2 and SHC1. Promotes phosphorylation of ASAP2, RHOU and PXN; this requires both SRC and PTK2/PYK2 (By similarity).</text>
</comment>
<comment type="catalytic activity">
    <reaction evidence="5 9">
        <text>L-tyrosyl-[protein] + ATP = O-phospho-L-tyrosyl-[protein] + ADP + H(+)</text>
        <dbReference type="Rhea" id="RHEA:10596"/>
        <dbReference type="Rhea" id="RHEA-COMP:10136"/>
        <dbReference type="Rhea" id="RHEA-COMP:20101"/>
        <dbReference type="ChEBI" id="CHEBI:15378"/>
        <dbReference type="ChEBI" id="CHEBI:30616"/>
        <dbReference type="ChEBI" id="CHEBI:46858"/>
        <dbReference type="ChEBI" id="CHEBI:61978"/>
        <dbReference type="ChEBI" id="CHEBI:456216"/>
        <dbReference type="EC" id="2.7.10.2"/>
    </reaction>
</comment>
<comment type="activity regulation">
    <text evidence="1">Activated in response to stimuli that lead to increased intracellular Ca(2+) levels; this activation is indirect and may be mediated by calcium-mediated production of reactive oxygen species (ROS). Activated by autophosphorylation at Tyr-402; this creates a binding site for SRC family kinases and leads to phosphorylation at additional tyrosine residues. Phosphorylation at Tyr-402, Tyr-579 and Tyr-580 is required for optimal kinase activity (By similarity).</text>
</comment>
<comment type="subunit">
    <text evidence="1 7 10 11 13 14">Homodimer, or homooligomer. Interacts with NPHP1, ASAP1, ASAP2, ARHGAP26, SKAP2 and TGFB1I1. The Tyr-402 phosphorylated form interacts with SRC (via SH2 domain) and SRC family members. Forms a signaling complex with EPHA1, LCK and phosphatidylinositol 3-kinase; upon activation by EFNA1. Interacts with GRB2 (via SH2 domain). Interacts with P53/TP53 and MDM2. Interacts with MYLK. Interacts with BCAR1. Interacts with RB1CC1. Interacts with RHOU. Interacts with VAV1. Interacts with PDPK1. Interacts with LPXN and PTPN12 (By similarity). Interacts with SIRPA and SH2D3C. Interacts (hypophosphorylated) with PXN. Interacts with ARHGAP10. Interacts with KCNA2 (PubMed:11739373).</text>
</comment>
<comment type="subcellular location">
    <subcellularLocation>
        <location evidence="15">Cytoplasm</location>
    </subcellularLocation>
    <subcellularLocation>
        <location evidence="1">Cytoplasm</location>
        <location evidence="1">Perinuclear region</location>
    </subcellularLocation>
    <subcellularLocation>
        <location evidence="15">Cell membrane</location>
        <topology evidence="15">Peripheral membrane protein</topology>
        <orientation evidence="15">Cytoplasmic side</orientation>
    </subcellularLocation>
    <subcellularLocation>
        <location evidence="1">Cell projection</location>
        <location evidence="1">Lamellipodium</location>
    </subcellularLocation>
    <subcellularLocation>
        <location evidence="1">Cytoplasm</location>
        <location evidence="1">Cell cortex</location>
    </subcellularLocation>
    <subcellularLocation>
        <location evidence="1">Nucleus</location>
    </subcellularLocation>
    <text evidence="1">Colocalizes with integrins at the cell periphery. Interaction with NPHP1 induces the membrane-association of the kinase. Colocalizes with PXN at the microtubule-organizing center. The tyrosine phosphorylated form is detected at cell-cell contacts (By similarity).</text>
</comment>
<comment type="subcellular location">
    <molecule>Isoform 2</molecule>
    <subcellularLocation>
        <location>Cell junction</location>
        <location>Focal adhesion</location>
    </subcellularLocation>
    <text>Localizes to focal adhesions, but not isoform 1 and isoform 3.</text>
</comment>
<comment type="alternative products">
    <event type="alternative splicing"/>
    <isoform>
        <id>P70600-1</id>
        <name>1</name>
        <sequence type="displayed"/>
    </isoform>
    <isoform>
        <id>P70600-2</id>
        <name>2</name>
        <name>PRNK</name>
        <sequence type="described" ref="VSP_004982 VSP_004983"/>
    </isoform>
    <isoform>
        <id>P70600-3</id>
        <name>3</name>
        <name>PYK2s</name>
        <sequence type="described" ref="VSP_004984"/>
    </isoform>
</comment>
<comment type="tissue specificity">
    <text evidence="8">Highly expressed in pulmonary vein endothelial cells, lung and brain (at protein level). Isoform 1 is expressed at high levels in the brain (hippocampus, cerebral cortex and olfactory bulb) and poorly in the spleen and other tissues, whereas isoforms 2 and 3 are expressed in the spleen and brain (highest in cerebellum).</text>
</comment>
<comment type="PTM">
    <text evidence="1">Phosphorylated on tyrosine residues in response to various stimuli that elevate the intracellular calcium concentration; this activation is indirect and may be mediated by production of reactive oxygen species (ROS). Tyr-402 is the major autophosphorylation site, but other kinases can also phosphorylate Tyr-402. Autophosphorylation occurs in trans, i.e. one subunit of the dimeric receptor phosphorylates tyrosine residues on the other subunit. Phosphorylation at Tyr-402 promotes interaction with SRC and SRC family members, leading to phosphorylation at Tyr-579; Tyr-580 and Tyr-881. Phosphorylation at Tyr-881 is important for interaction with GRB2. Phosphorylated on tyrosine residues upon activation of FGR and PKC. Recruitment by NPHP1 to cell matrix adhesions initiates Tyr-402 phosphorylation. In monocytes, adherence to substrata is required for tyrosine phosphorylation and kinase activation. Angiotensin II, thapsigargin and L-alpha-lysophosphatidic acid (LPA) also induce autophosphorylation and increase kinase activity. Phosphorylation by MYLK promotes ITGB2 activation and is thus essential to trigger neutrophil transmigration during lung injury. Dephosphorylated by PTPN12 (By similarity).</text>
</comment>
<comment type="similarity">
    <text evidence="4">Belongs to the protein kinase superfamily. Tyr protein kinase family. FAK subfamily.</text>
</comment>
<feature type="chain" id="PRO_0000088083" description="Protein-tyrosine kinase 2-beta">
    <location>
        <begin position="1"/>
        <end position="1009"/>
    </location>
</feature>
<feature type="domain" description="FERM" evidence="3">
    <location>
        <begin position="39"/>
        <end position="359"/>
    </location>
</feature>
<feature type="domain" description="Protein kinase" evidence="4">
    <location>
        <begin position="425"/>
        <end position="683"/>
    </location>
</feature>
<feature type="region of interest" description="Disordered" evidence="6">
    <location>
        <begin position="702"/>
        <end position="725"/>
    </location>
</feature>
<feature type="region of interest" description="Interaction with TGFB1I1" evidence="14">
    <location>
        <begin position="801"/>
        <end position="1009"/>
    </location>
</feature>
<feature type="region of interest" description="Focal adhesion targeting (FAT)">
    <location>
        <begin position="868"/>
        <end position="1009"/>
    </location>
</feature>
<feature type="active site" description="Proton acceptor" evidence="4 5">
    <location>
        <position position="549"/>
    </location>
</feature>
<feature type="binding site" evidence="4">
    <location>
        <begin position="431"/>
        <end position="439"/>
    </location>
    <ligand>
        <name>ATP</name>
        <dbReference type="ChEBI" id="CHEBI:30616"/>
    </ligand>
</feature>
<feature type="binding site" evidence="4">
    <location>
        <position position="457"/>
    </location>
    <ligand>
        <name>ATP</name>
        <dbReference type="ChEBI" id="CHEBI:30616"/>
    </ligand>
</feature>
<feature type="binding site" evidence="4">
    <location>
        <begin position="503"/>
        <end position="509"/>
    </location>
    <ligand>
        <name>ATP</name>
        <dbReference type="ChEBI" id="CHEBI:30616"/>
    </ligand>
</feature>
<feature type="modified residue" description="Phosphoserine" evidence="2">
    <location>
        <position position="361"/>
    </location>
</feature>
<feature type="modified residue" description="Phosphoserine" evidence="18">
    <location>
        <position position="375"/>
    </location>
</feature>
<feature type="modified residue" description="Phosphoserine" evidence="2">
    <location>
        <position position="399"/>
    </location>
</feature>
<feature type="modified residue" description="Phosphotyrosine; by autocatalysis" evidence="9 11">
    <location>
        <position position="402"/>
    </location>
</feature>
<feature type="modified residue" description="Phosphotyrosine" evidence="11">
    <location>
        <position position="579"/>
    </location>
</feature>
<feature type="modified residue" description="Phosphotyrosine" evidence="9 11">
    <location>
        <position position="580"/>
    </location>
</feature>
<feature type="modified residue" description="Phosphotyrosine" evidence="2">
    <location>
        <position position="722"/>
    </location>
</feature>
<feature type="modified residue" description="Phosphoserine" evidence="2">
    <location>
        <position position="762"/>
    </location>
</feature>
<feature type="modified residue" description="Phosphothreonine" evidence="2">
    <location>
        <position position="765"/>
    </location>
</feature>
<feature type="modified residue" description="Phosphotyrosine" evidence="2">
    <location>
        <position position="834"/>
    </location>
</feature>
<feature type="modified residue" description="Phosphoserine" evidence="2">
    <location>
        <position position="839"/>
    </location>
</feature>
<feature type="modified residue" description="Phosphothreonine" evidence="2">
    <location>
        <position position="842"/>
    </location>
</feature>
<feature type="modified residue" description="Phosphotyrosine" evidence="2">
    <location>
        <position position="849"/>
    </location>
</feature>
<feature type="modified residue" description="Phosphoserine" evidence="2">
    <location>
        <position position="866"/>
    </location>
</feature>
<feature type="modified residue" description="Phosphotyrosine" evidence="2">
    <location>
        <position position="881"/>
    </location>
</feature>
<feature type="splice variant" id="VSP_004982" description="In isoform 2." evidence="16">
    <location>
        <begin position="1"/>
        <end position="771"/>
    </location>
</feature>
<feature type="splice variant" id="VSP_004984" description="In isoform 3." evidence="16">
    <location>
        <begin position="739"/>
        <end position="780"/>
    </location>
</feature>
<feature type="splice variant" id="VSP_004983" description="In isoform 2." evidence="16">
    <original>NVFKRHSMR</original>
    <variation>MGLIVLSSQ</variation>
    <location>
        <begin position="772"/>
        <end position="780"/>
    </location>
</feature>
<feature type="sequence conflict" description="In Ref. 2; BAA08290." evidence="17" ref="2">
    <original>E</original>
    <variation>A</variation>
    <location>
        <position position="205"/>
    </location>
</feature>
<feature type="sequence conflict" description="In Ref. 3; AAC28340." evidence="17" ref="3">
    <original>V</original>
    <variation>F</variation>
    <location>
        <position position="807"/>
    </location>
</feature>